<proteinExistence type="inferred from homology"/>
<gene>
    <name evidence="1" type="primary">glpE</name>
    <name type="ordered locus">STY4278</name>
    <name type="ordered locus">t3988</name>
</gene>
<protein>
    <recommendedName>
        <fullName evidence="1">Thiosulfate sulfurtransferase GlpE</fullName>
        <ecNumber evidence="1">2.8.1.1</ecNumber>
    </recommendedName>
</protein>
<sequence length="108" mass="11973">MEQFECITVEEAYQKLHQGAAVLVDIRDPQSYAMGHAPQAFHLTNDTLGAFMREHGFDTAVMVMCYHGNSSKGAAQYLLQQGYDAVYSIDGGFEAWHRRFPADVANGA</sequence>
<accession>P64252</accession>
<accession>Q8XFC6</accession>
<organism>
    <name type="scientific">Salmonella typhi</name>
    <dbReference type="NCBI Taxonomy" id="90370"/>
    <lineage>
        <taxon>Bacteria</taxon>
        <taxon>Pseudomonadati</taxon>
        <taxon>Pseudomonadota</taxon>
        <taxon>Gammaproteobacteria</taxon>
        <taxon>Enterobacterales</taxon>
        <taxon>Enterobacteriaceae</taxon>
        <taxon>Salmonella</taxon>
    </lineage>
</organism>
<reference key="1">
    <citation type="journal article" date="2001" name="Nature">
        <title>Complete genome sequence of a multiple drug resistant Salmonella enterica serovar Typhi CT18.</title>
        <authorList>
            <person name="Parkhill J."/>
            <person name="Dougan G."/>
            <person name="James K.D."/>
            <person name="Thomson N.R."/>
            <person name="Pickard D."/>
            <person name="Wain J."/>
            <person name="Churcher C.M."/>
            <person name="Mungall K.L."/>
            <person name="Bentley S.D."/>
            <person name="Holden M.T.G."/>
            <person name="Sebaihia M."/>
            <person name="Baker S."/>
            <person name="Basham D."/>
            <person name="Brooks K."/>
            <person name="Chillingworth T."/>
            <person name="Connerton P."/>
            <person name="Cronin A."/>
            <person name="Davis P."/>
            <person name="Davies R.M."/>
            <person name="Dowd L."/>
            <person name="White N."/>
            <person name="Farrar J."/>
            <person name="Feltwell T."/>
            <person name="Hamlin N."/>
            <person name="Haque A."/>
            <person name="Hien T.T."/>
            <person name="Holroyd S."/>
            <person name="Jagels K."/>
            <person name="Krogh A."/>
            <person name="Larsen T.S."/>
            <person name="Leather S."/>
            <person name="Moule S."/>
            <person name="O'Gaora P."/>
            <person name="Parry C."/>
            <person name="Quail M.A."/>
            <person name="Rutherford K.M."/>
            <person name="Simmonds M."/>
            <person name="Skelton J."/>
            <person name="Stevens K."/>
            <person name="Whitehead S."/>
            <person name="Barrell B.G."/>
        </authorList>
    </citation>
    <scope>NUCLEOTIDE SEQUENCE [LARGE SCALE GENOMIC DNA]</scope>
    <source>
        <strain>CT18</strain>
    </source>
</reference>
<reference key="2">
    <citation type="journal article" date="2003" name="J. Bacteriol.">
        <title>Comparative genomics of Salmonella enterica serovar Typhi strains Ty2 and CT18.</title>
        <authorList>
            <person name="Deng W."/>
            <person name="Liou S.-R."/>
            <person name="Plunkett G. III"/>
            <person name="Mayhew G.F."/>
            <person name="Rose D.J."/>
            <person name="Burland V."/>
            <person name="Kodoyianni V."/>
            <person name="Schwartz D.C."/>
            <person name="Blattner F.R."/>
        </authorList>
    </citation>
    <scope>NUCLEOTIDE SEQUENCE [LARGE SCALE GENOMIC DNA]</scope>
    <source>
        <strain>ATCC 700931 / Ty2</strain>
    </source>
</reference>
<name>GLPE_SALTI</name>
<keyword id="KW-0963">Cytoplasm</keyword>
<keyword id="KW-0808">Transferase</keyword>
<dbReference type="EC" id="2.8.1.1" evidence="1"/>
<dbReference type="EMBL" id="AL513382">
    <property type="protein sequence ID" value="CAD08096.1"/>
    <property type="molecule type" value="Genomic_DNA"/>
</dbReference>
<dbReference type="EMBL" id="AE014613">
    <property type="protein sequence ID" value="AAO71458.1"/>
    <property type="molecule type" value="Genomic_DNA"/>
</dbReference>
<dbReference type="RefSeq" id="NP_458386.1">
    <property type="nucleotide sequence ID" value="NC_003198.1"/>
</dbReference>
<dbReference type="RefSeq" id="WP_000434523.1">
    <property type="nucleotide sequence ID" value="NZ_WSUR01000001.1"/>
</dbReference>
<dbReference type="SMR" id="P64252"/>
<dbReference type="STRING" id="220341.gene:17588109"/>
<dbReference type="KEGG" id="stt:t3988"/>
<dbReference type="KEGG" id="sty:STY4278"/>
<dbReference type="PATRIC" id="fig|220341.7.peg.4371"/>
<dbReference type="eggNOG" id="COG0607">
    <property type="taxonomic scope" value="Bacteria"/>
</dbReference>
<dbReference type="HOGENOM" id="CLU_089574_14_0_6"/>
<dbReference type="OMA" id="VCYHGIS"/>
<dbReference type="OrthoDB" id="9811849at2"/>
<dbReference type="Proteomes" id="UP000000541">
    <property type="component" value="Chromosome"/>
</dbReference>
<dbReference type="Proteomes" id="UP000002670">
    <property type="component" value="Chromosome"/>
</dbReference>
<dbReference type="GO" id="GO:0005737">
    <property type="term" value="C:cytoplasm"/>
    <property type="evidence" value="ECO:0007669"/>
    <property type="project" value="UniProtKB-SubCell"/>
</dbReference>
<dbReference type="GO" id="GO:0004792">
    <property type="term" value="F:thiosulfate-cyanide sulfurtransferase activity"/>
    <property type="evidence" value="ECO:0007669"/>
    <property type="project" value="UniProtKB-UniRule"/>
</dbReference>
<dbReference type="GO" id="GO:0006071">
    <property type="term" value="P:glycerol metabolic process"/>
    <property type="evidence" value="ECO:0007669"/>
    <property type="project" value="UniProtKB-UniRule"/>
</dbReference>
<dbReference type="CDD" id="cd01444">
    <property type="entry name" value="GlpE_ST"/>
    <property type="match status" value="1"/>
</dbReference>
<dbReference type="FunFam" id="3.40.250.10:FF:000007">
    <property type="entry name" value="Thiosulfate sulfurtransferase GlpE"/>
    <property type="match status" value="1"/>
</dbReference>
<dbReference type="Gene3D" id="3.40.250.10">
    <property type="entry name" value="Rhodanese-like domain"/>
    <property type="match status" value="1"/>
</dbReference>
<dbReference type="HAMAP" id="MF_01009">
    <property type="entry name" value="Thiosulf_sulfurtr"/>
    <property type="match status" value="1"/>
</dbReference>
<dbReference type="InterPro" id="IPR050229">
    <property type="entry name" value="GlpE_sulfurtransferase"/>
</dbReference>
<dbReference type="InterPro" id="IPR001763">
    <property type="entry name" value="Rhodanese-like_dom"/>
</dbReference>
<dbReference type="InterPro" id="IPR036873">
    <property type="entry name" value="Rhodanese-like_dom_sf"/>
</dbReference>
<dbReference type="InterPro" id="IPR023695">
    <property type="entry name" value="Thiosulf_sulfurTrfase"/>
</dbReference>
<dbReference type="NCBIfam" id="NF001195">
    <property type="entry name" value="PRK00162.1"/>
    <property type="match status" value="1"/>
</dbReference>
<dbReference type="PANTHER" id="PTHR43031">
    <property type="entry name" value="FAD-DEPENDENT OXIDOREDUCTASE"/>
    <property type="match status" value="1"/>
</dbReference>
<dbReference type="PANTHER" id="PTHR43031:SF6">
    <property type="entry name" value="THIOSULFATE SULFURTRANSFERASE GLPE"/>
    <property type="match status" value="1"/>
</dbReference>
<dbReference type="Pfam" id="PF00581">
    <property type="entry name" value="Rhodanese"/>
    <property type="match status" value="1"/>
</dbReference>
<dbReference type="SMART" id="SM00450">
    <property type="entry name" value="RHOD"/>
    <property type="match status" value="1"/>
</dbReference>
<dbReference type="SUPFAM" id="SSF52821">
    <property type="entry name" value="Rhodanese/Cell cycle control phosphatase"/>
    <property type="match status" value="1"/>
</dbReference>
<dbReference type="PROSITE" id="PS50206">
    <property type="entry name" value="RHODANESE_3"/>
    <property type="match status" value="1"/>
</dbReference>
<comment type="function">
    <text evidence="1">Transferase that catalyzes the transfer of sulfur from thiosulfate to thiophilic acceptors such as cyanide or dithiols. May function in a CysM-independent thiosulfate assimilation pathway by catalyzing the conversion of thiosulfate to sulfite, which can then be used for L-cysteine biosynthesis.</text>
</comment>
<comment type="catalytic activity">
    <reaction evidence="1">
        <text>thiosulfate + hydrogen cyanide = thiocyanate + sulfite + 2 H(+)</text>
        <dbReference type="Rhea" id="RHEA:16881"/>
        <dbReference type="ChEBI" id="CHEBI:15378"/>
        <dbReference type="ChEBI" id="CHEBI:17359"/>
        <dbReference type="ChEBI" id="CHEBI:18022"/>
        <dbReference type="ChEBI" id="CHEBI:18407"/>
        <dbReference type="ChEBI" id="CHEBI:33542"/>
        <dbReference type="EC" id="2.8.1.1"/>
    </reaction>
</comment>
<comment type="catalytic activity">
    <reaction evidence="1">
        <text>thiosulfate + [thioredoxin]-dithiol = [thioredoxin]-disulfide + hydrogen sulfide + sulfite + 2 H(+)</text>
        <dbReference type="Rhea" id="RHEA:83859"/>
        <dbReference type="Rhea" id="RHEA-COMP:10698"/>
        <dbReference type="Rhea" id="RHEA-COMP:10700"/>
        <dbReference type="ChEBI" id="CHEBI:15378"/>
        <dbReference type="ChEBI" id="CHEBI:17359"/>
        <dbReference type="ChEBI" id="CHEBI:29919"/>
        <dbReference type="ChEBI" id="CHEBI:29950"/>
        <dbReference type="ChEBI" id="CHEBI:33542"/>
        <dbReference type="ChEBI" id="CHEBI:50058"/>
    </reaction>
</comment>
<comment type="subcellular location">
    <subcellularLocation>
        <location evidence="1">Cytoplasm</location>
    </subcellularLocation>
</comment>
<comment type="similarity">
    <text evidence="1">Belongs to the GlpE family.</text>
</comment>
<evidence type="ECO:0000255" key="1">
    <source>
        <dbReference type="HAMAP-Rule" id="MF_01009"/>
    </source>
</evidence>
<feature type="chain" id="PRO_0000200564" description="Thiosulfate sulfurtransferase GlpE">
    <location>
        <begin position="1"/>
        <end position="108"/>
    </location>
</feature>
<feature type="domain" description="Rhodanese" evidence="1">
    <location>
        <begin position="17"/>
        <end position="105"/>
    </location>
</feature>
<feature type="active site" description="Cysteine persulfide intermediate" evidence="1">
    <location>
        <position position="65"/>
    </location>
</feature>